<feature type="chain" id="PRO_0000330529" description="Siroheme synthase">
    <location>
        <begin position="1"/>
        <end position="469"/>
    </location>
</feature>
<feature type="region of interest" description="Precorrin-2 dehydrogenase /sirohydrochlorin ferrochelatase" evidence="1">
    <location>
        <begin position="1"/>
        <end position="203"/>
    </location>
</feature>
<feature type="region of interest" description="Uroporphyrinogen-III C-methyltransferase" evidence="1">
    <location>
        <begin position="214"/>
        <end position="469"/>
    </location>
</feature>
<feature type="active site" description="Proton acceptor" evidence="1">
    <location>
        <position position="246"/>
    </location>
</feature>
<feature type="active site" description="Proton donor" evidence="1">
    <location>
        <position position="268"/>
    </location>
</feature>
<feature type="binding site" evidence="1">
    <location>
        <begin position="22"/>
        <end position="23"/>
    </location>
    <ligand>
        <name>NAD(+)</name>
        <dbReference type="ChEBI" id="CHEBI:57540"/>
    </ligand>
</feature>
<feature type="binding site" evidence="1">
    <location>
        <begin position="43"/>
        <end position="44"/>
    </location>
    <ligand>
        <name>NAD(+)</name>
        <dbReference type="ChEBI" id="CHEBI:57540"/>
    </ligand>
</feature>
<feature type="binding site" evidence="1">
    <location>
        <position position="223"/>
    </location>
    <ligand>
        <name>S-adenosyl-L-methionine</name>
        <dbReference type="ChEBI" id="CHEBI:59789"/>
    </ligand>
</feature>
<feature type="binding site" evidence="1">
    <location>
        <begin position="299"/>
        <end position="301"/>
    </location>
    <ligand>
        <name>S-adenosyl-L-methionine</name>
        <dbReference type="ChEBI" id="CHEBI:59789"/>
    </ligand>
</feature>
<feature type="binding site" evidence="1">
    <location>
        <position position="304"/>
    </location>
    <ligand>
        <name>S-adenosyl-L-methionine</name>
        <dbReference type="ChEBI" id="CHEBI:59789"/>
    </ligand>
</feature>
<feature type="binding site" evidence="1">
    <location>
        <begin position="329"/>
        <end position="330"/>
    </location>
    <ligand>
        <name>S-adenosyl-L-methionine</name>
        <dbReference type="ChEBI" id="CHEBI:59789"/>
    </ligand>
</feature>
<feature type="binding site" evidence="1">
    <location>
        <position position="381"/>
    </location>
    <ligand>
        <name>S-adenosyl-L-methionine</name>
        <dbReference type="ChEBI" id="CHEBI:59789"/>
    </ligand>
</feature>
<feature type="binding site" evidence="1">
    <location>
        <position position="410"/>
    </location>
    <ligand>
        <name>S-adenosyl-L-methionine</name>
        <dbReference type="ChEBI" id="CHEBI:59789"/>
    </ligand>
</feature>
<feature type="modified residue" description="Phosphoserine" evidence="1">
    <location>
        <position position="128"/>
    </location>
</feature>
<organism>
    <name type="scientific">Photobacterium profundum (strain SS9)</name>
    <dbReference type="NCBI Taxonomy" id="298386"/>
    <lineage>
        <taxon>Bacteria</taxon>
        <taxon>Pseudomonadati</taxon>
        <taxon>Pseudomonadota</taxon>
        <taxon>Gammaproteobacteria</taxon>
        <taxon>Vibrionales</taxon>
        <taxon>Vibrionaceae</taxon>
        <taxon>Photobacterium</taxon>
    </lineage>
</organism>
<proteinExistence type="inferred from homology"/>
<keyword id="KW-0169">Cobalamin biosynthesis</keyword>
<keyword id="KW-0456">Lyase</keyword>
<keyword id="KW-0489">Methyltransferase</keyword>
<keyword id="KW-0511">Multifunctional enzyme</keyword>
<keyword id="KW-0520">NAD</keyword>
<keyword id="KW-0560">Oxidoreductase</keyword>
<keyword id="KW-0597">Phosphoprotein</keyword>
<keyword id="KW-0627">Porphyrin biosynthesis</keyword>
<keyword id="KW-1185">Reference proteome</keyword>
<keyword id="KW-0949">S-adenosyl-L-methionine</keyword>
<keyword id="KW-0808">Transferase</keyword>
<evidence type="ECO:0000255" key="1">
    <source>
        <dbReference type="HAMAP-Rule" id="MF_01646"/>
    </source>
</evidence>
<accession>Q6LM67</accession>
<reference key="1">
    <citation type="journal article" date="2005" name="Science">
        <title>Life at depth: Photobacterium profundum genome sequence and expression analysis.</title>
        <authorList>
            <person name="Vezzi A."/>
            <person name="Campanaro S."/>
            <person name="D'Angelo M."/>
            <person name="Simonato F."/>
            <person name="Vitulo N."/>
            <person name="Lauro F.M."/>
            <person name="Cestaro A."/>
            <person name="Malacrida G."/>
            <person name="Simionati B."/>
            <person name="Cannata N."/>
            <person name="Romualdi C."/>
            <person name="Bartlett D.H."/>
            <person name="Valle G."/>
        </authorList>
    </citation>
    <scope>NUCLEOTIDE SEQUENCE [LARGE SCALE GENOMIC DNA]</scope>
    <source>
        <strain>ATCC BAA-1253 / SS9</strain>
    </source>
</reference>
<name>CYSG_PHOPR</name>
<sequence>MDYLPIFTDLKRRPCLVVGGGDVAWRKARMLLKAGADVRVIAPVLNQAFQQAIEQQQVSHVADEFESSHLDGIFLAIAATDRKAVNALVYQSANQRQVLVNVVDDTQRCSFIIPSIIDRSPIIVAVSSSGKAPVLARLIREKLEALLPQHLGRMATIAGNFRARLAKTVTSFSARRQFWEQVFDGRFSDLVACGQEQDAKQELINLTQSTSPQGQVALIGSGPGDAGLLTLRALQLMQQADVVLYDYLVSDEVMDLVRRDAELVCVGKKAGFHSVPQEETNQLIVKYAQQGKRVVRLKGGDPFVFGRGGEELEVLFDANILFQVVPGITAAAGATAYAGIPLTHRDYAQTAMFVTGHLKAESDQMDWSTLARGKQTLVIYMGLMKSGHIQQQLLINGRAGDTPIAIIERGTQKKQKVIKGQLSELEQLAKNAESPSLIVIGEVVNLSEKLHWFGKQEQSLQQSAVVKLA</sequence>
<comment type="function">
    <text evidence="1">Multifunctional enzyme that catalyzes the SAM-dependent methylations of uroporphyrinogen III at position C-2 and C-7 to form precorrin-2 via precorrin-1. Then it catalyzes the NAD-dependent ring dehydrogenation of precorrin-2 to yield sirohydrochlorin. Finally, it catalyzes the ferrochelation of sirohydrochlorin to yield siroheme.</text>
</comment>
<comment type="catalytic activity">
    <reaction evidence="1">
        <text>uroporphyrinogen III + 2 S-adenosyl-L-methionine = precorrin-2 + 2 S-adenosyl-L-homocysteine + H(+)</text>
        <dbReference type="Rhea" id="RHEA:32459"/>
        <dbReference type="ChEBI" id="CHEBI:15378"/>
        <dbReference type="ChEBI" id="CHEBI:57308"/>
        <dbReference type="ChEBI" id="CHEBI:57856"/>
        <dbReference type="ChEBI" id="CHEBI:58827"/>
        <dbReference type="ChEBI" id="CHEBI:59789"/>
        <dbReference type="EC" id="2.1.1.107"/>
    </reaction>
</comment>
<comment type="catalytic activity">
    <reaction evidence="1">
        <text>precorrin-2 + NAD(+) = sirohydrochlorin + NADH + 2 H(+)</text>
        <dbReference type="Rhea" id="RHEA:15613"/>
        <dbReference type="ChEBI" id="CHEBI:15378"/>
        <dbReference type="ChEBI" id="CHEBI:57540"/>
        <dbReference type="ChEBI" id="CHEBI:57945"/>
        <dbReference type="ChEBI" id="CHEBI:58351"/>
        <dbReference type="ChEBI" id="CHEBI:58827"/>
        <dbReference type="EC" id="1.3.1.76"/>
    </reaction>
</comment>
<comment type="catalytic activity">
    <reaction evidence="1">
        <text>siroheme + 2 H(+) = sirohydrochlorin + Fe(2+)</text>
        <dbReference type="Rhea" id="RHEA:24360"/>
        <dbReference type="ChEBI" id="CHEBI:15378"/>
        <dbReference type="ChEBI" id="CHEBI:29033"/>
        <dbReference type="ChEBI" id="CHEBI:58351"/>
        <dbReference type="ChEBI" id="CHEBI:60052"/>
        <dbReference type="EC" id="4.99.1.4"/>
    </reaction>
</comment>
<comment type="pathway">
    <text evidence="1">Cofactor biosynthesis; adenosylcobalamin biosynthesis; precorrin-2 from uroporphyrinogen III: step 1/1.</text>
</comment>
<comment type="pathway">
    <text evidence="1">Cofactor biosynthesis; adenosylcobalamin biosynthesis; sirohydrochlorin from precorrin-2: step 1/1.</text>
</comment>
<comment type="pathway">
    <text evidence="1">Porphyrin-containing compound metabolism; siroheme biosynthesis; precorrin-2 from uroporphyrinogen III: step 1/1.</text>
</comment>
<comment type="pathway">
    <text evidence="1">Porphyrin-containing compound metabolism; siroheme biosynthesis; siroheme from sirohydrochlorin: step 1/1.</text>
</comment>
<comment type="pathway">
    <text evidence="1">Porphyrin-containing compound metabolism; siroheme biosynthesis; sirohydrochlorin from precorrin-2: step 1/1.</text>
</comment>
<comment type="similarity">
    <text evidence="1">In the N-terminal section; belongs to the precorrin-2 dehydrogenase / sirohydrochlorin ferrochelatase family.</text>
</comment>
<comment type="similarity">
    <text evidence="1">In the C-terminal section; belongs to the precorrin methyltransferase family.</text>
</comment>
<protein>
    <recommendedName>
        <fullName evidence="1">Siroheme synthase</fullName>
    </recommendedName>
    <domain>
        <recommendedName>
            <fullName evidence="1">Uroporphyrinogen-III C-methyltransferase</fullName>
            <shortName evidence="1">Urogen III methylase</shortName>
            <ecNumber evidence="1">2.1.1.107</ecNumber>
        </recommendedName>
        <alternativeName>
            <fullName evidence="1">SUMT</fullName>
        </alternativeName>
        <alternativeName>
            <fullName evidence="1">Uroporphyrinogen III methylase</fullName>
            <shortName evidence="1">UROM</shortName>
        </alternativeName>
    </domain>
    <domain>
        <recommendedName>
            <fullName evidence="1">Precorrin-2 dehydrogenase</fullName>
            <ecNumber evidence="1">1.3.1.76</ecNumber>
        </recommendedName>
    </domain>
    <domain>
        <recommendedName>
            <fullName evidence="1">Sirohydrochlorin ferrochelatase</fullName>
            <ecNumber evidence="1">4.99.1.4</ecNumber>
        </recommendedName>
    </domain>
</protein>
<dbReference type="EC" id="2.1.1.107" evidence="1"/>
<dbReference type="EC" id="1.3.1.76" evidence="1"/>
<dbReference type="EC" id="4.99.1.4" evidence="1"/>
<dbReference type="EMBL" id="CR378673">
    <property type="protein sequence ID" value="CAG21610.1"/>
    <property type="molecule type" value="Genomic_DNA"/>
</dbReference>
<dbReference type="RefSeq" id="WP_011219859.1">
    <property type="nucleotide sequence ID" value="NC_006370.1"/>
</dbReference>
<dbReference type="SMR" id="Q6LM67"/>
<dbReference type="STRING" id="298386.PBPRA3312"/>
<dbReference type="KEGG" id="ppr:PBPRA3312"/>
<dbReference type="eggNOG" id="COG0007">
    <property type="taxonomic scope" value="Bacteria"/>
</dbReference>
<dbReference type="eggNOG" id="COG1648">
    <property type="taxonomic scope" value="Bacteria"/>
</dbReference>
<dbReference type="HOGENOM" id="CLU_011276_2_0_6"/>
<dbReference type="UniPathway" id="UPA00148">
    <property type="reaction ID" value="UER00211"/>
</dbReference>
<dbReference type="UniPathway" id="UPA00148">
    <property type="reaction ID" value="UER00222"/>
</dbReference>
<dbReference type="UniPathway" id="UPA00262">
    <property type="reaction ID" value="UER00211"/>
</dbReference>
<dbReference type="UniPathway" id="UPA00262">
    <property type="reaction ID" value="UER00222"/>
</dbReference>
<dbReference type="UniPathway" id="UPA00262">
    <property type="reaction ID" value="UER00376"/>
</dbReference>
<dbReference type="Proteomes" id="UP000000593">
    <property type="component" value="Chromosome 1"/>
</dbReference>
<dbReference type="GO" id="GO:0051287">
    <property type="term" value="F:NAD binding"/>
    <property type="evidence" value="ECO:0007669"/>
    <property type="project" value="InterPro"/>
</dbReference>
<dbReference type="GO" id="GO:0043115">
    <property type="term" value="F:precorrin-2 dehydrogenase activity"/>
    <property type="evidence" value="ECO:0007669"/>
    <property type="project" value="UniProtKB-UniRule"/>
</dbReference>
<dbReference type="GO" id="GO:0051266">
    <property type="term" value="F:sirohydrochlorin ferrochelatase activity"/>
    <property type="evidence" value="ECO:0007669"/>
    <property type="project" value="UniProtKB-EC"/>
</dbReference>
<dbReference type="GO" id="GO:0004851">
    <property type="term" value="F:uroporphyrin-III C-methyltransferase activity"/>
    <property type="evidence" value="ECO:0007669"/>
    <property type="project" value="UniProtKB-UniRule"/>
</dbReference>
<dbReference type="GO" id="GO:0009236">
    <property type="term" value="P:cobalamin biosynthetic process"/>
    <property type="evidence" value="ECO:0007669"/>
    <property type="project" value="UniProtKB-UniRule"/>
</dbReference>
<dbReference type="GO" id="GO:0032259">
    <property type="term" value="P:methylation"/>
    <property type="evidence" value="ECO:0007669"/>
    <property type="project" value="UniProtKB-KW"/>
</dbReference>
<dbReference type="GO" id="GO:0019354">
    <property type="term" value="P:siroheme biosynthetic process"/>
    <property type="evidence" value="ECO:0007669"/>
    <property type="project" value="UniProtKB-UniRule"/>
</dbReference>
<dbReference type="CDD" id="cd11642">
    <property type="entry name" value="SUMT"/>
    <property type="match status" value="1"/>
</dbReference>
<dbReference type="FunFam" id="3.30.160.110:FF:000001">
    <property type="entry name" value="Siroheme synthase"/>
    <property type="match status" value="1"/>
</dbReference>
<dbReference type="FunFam" id="3.30.950.10:FF:000001">
    <property type="entry name" value="Siroheme synthase"/>
    <property type="match status" value="1"/>
</dbReference>
<dbReference type="FunFam" id="3.40.1010.10:FF:000001">
    <property type="entry name" value="Siroheme synthase"/>
    <property type="match status" value="1"/>
</dbReference>
<dbReference type="Gene3D" id="3.40.1010.10">
    <property type="entry name" value="Cobalt-precorrin-4 Transmethylase, Domain 1"/>
    <property type="match status" value="1"/>
</dbReference>
<dbReference type="Gene3D" id="3.30.950.10">
    <property type="entry name" value="Methyltransferase, Cobalt-precorrin-4 Transmethylase, Domain 2"/>
    <property type="match status" value="1"/>
</dbReference>
<dbReference type="Gene3D" id="3.40.50.720">
    <property type="entry name" value="NAD(P)-binding Rossmann-like Domain"/>
    <property type="match status" value="1"/>
</dbReference>
<dbReference type="Gene3D" id="1.10.8.210">
    <property type="entry name" value="Sirohaem synthase, dimerisation domain"/>
    <property type="match status" value="1"/>
</dbReference>
<dbReference type="Gene3D" id="3.30.160.110">
    <property type="entry name" value="Siroheme synthase, domain 2"/>
    <property type="match status" value="1"/>
</dbReference>
<dbReference type="HAMAP" id="MF_01646">
    <property type="entry name" value="Siroheme_synth"/>
    <property type="match status" value="1"/>
</dbReference>
<dbReference type="InterPro" id="IPR000878">
    <property type="entry name" value="4pyrrol_Mease"/>
</dbReference>
<dbReference type="InterPro" id="IPR035996">
    <property type="entry name" value="4pyrrol_Methylase_sf"/>
</dbReference>
<dbReference type="InterPro" id="IPR014777">
    <property type="entry name" value="4pyrrole_Mease_sub1"/>
</dbReference>
<dbReference type="InterPro" id="IPR014776">
    <property type="entry name" value="4pyrrole_Mease_sub2"/>
</dbReference>
<dbReference type="InterPro" id="IPR006366">
    <property type="entry name" value="CobA/CysG_C"/>
</dbReference>
<dbReference type="InterPro" id="IPR036291">
    <property type="entry name" value="NAD(P)-bd_dom_sf"/>
</dbReference>
<dbReference type="InterPro" id="IPR050161">
    <property type="entry name" value="Siro_Cobalamin_biosynth"/>
</dbReference>
<dbReference type="InterPro" id="IPR037115">
    <property type="entry name" value="Sirohaem_synt_dimer_dom_sf"/>
</dbReference>
<dbReference type="InterPro" id="IPR012409">
    <property type="entry name" value="Sirohaem_synth"/>
</dbReference>
<dbReference type="InterPro" id="IPR028281">
    <property type="entry name" value="Sirohaem_synthase_central"/>
</dbReference>
<dbReference type="InterPro" id="IPR019478">
    <property type="entry name" value="Sirohaem_synthase_dimer_dom"/>
</dbReference>
<dbReference type="InterPro" id="IPR006367">
    <property type="entry name" value="Sirohaem_synthase_N"/>
</dbReference>
<dbReference type="InterPro" id="IPR003043">
    <property type="entry name" value="Uropor_MeTrfase_CS"/>
</dbReference>
<dbReference type="NCBIfam" id="TIGR01469">
    <property type="entry name" value="cobA_cysG_Cterm"/>
    <property type="match status" value="1"/>
</dbReference>
<dbReference type="NCBIfam" id="TIGR01470">
    <property type="entry name" value="cysG_Nterm"/>
    <property type="match status" value="1"/>
</dbReference>
<dbReference type="NCBIfam" id="NF004790">
    <property type="entry name" value="PRK06136.1"/>
    <property type="match status" value="1"/>
</dbReference>
<dbReference type="NCBIfam" id="NF007922">
    <property type="entry name" value="PRK10637.1"/>
    <property type="match status" value="1"/>
</dbReference>
<dbReference type="PANTHER" id="PTHR45790:SF1">
    <property type="entry name" value="SIROHEME SYNTHASE"/>
    <property type="match status" value="1"/>
</dbReference>
<dbReference type="PANTHER" id="PTHR45790">
    <property type="entry name" value="SIROHEME SYNTHASE-RELATED"/>
    <property type="match status" value="1"/>
</dbReference>
<dbReference type="Pfam" id="PF10414">
    <property type="entry name" value="CysG_dimeriser"/>
    <property type="match status" value="1"/>
</dbReference>
<dbReference type="Pfam" id="PF13241">
    <property type="entry name" value="NAD_binding_7"/>
    <property type="match status" value="1"/>
</dbReference>
<dbReference type="Pfam" id="PF14824">
    <property type="entry name" value="Sirohm_synth_M"/>
    <property type="match status" value="1"/>
</dbReference>
<dbReference type="Pfam" id="PF00590">
    <property type="entry name" value="TP_methylase"/>
    <property type="match status" value="1"/>
</dbReference>
<dbReference type="PIRSF" id="PIRSF036426">
    <property type="entry name" value="Sirohaem_synth"/>
    <property type="match status" value="1"/>
</dbReference>
<dbReference type="SUPFAM" id="SSF51735">
    <property type="entry name" value="NAD(P)-binding Rossmann-fold domains"/>
    <property type="match status" value="1"/>
</dbReference>
<dbReference type="SUPFAM" id="SSF75615">
    <property type="entry name" value="Siroheme synthase middle domains-like"/>
    <property type="match status" value="1"/>
</dbReference>
<dbReference type="SUPFAM" id="SSF53790">
    <property type="entry name" value="Tetrapyrrole methylase"/>
    <property type="match status" value="1"/>
</dbReference>
<dbReference type="PROSITE" id="PS00839">
    <property type="entry name" value="SUMT_1"/>
    <property type="match status" value="1"/>
</dbReference>
<dbReference type="PROSITE" id="PS00840">
    <property type="entry name" value="SUMT_2"/>
    <property type="match status" value="1"/>
</dbReference>
<gene>
    <name evidence="1" type="primary">cysG</name>
    <name type="ordered locus">PBPRA3312</name>
</gene>